<feature type="chain" id="PRO_0000134210" description="Small ribosomal subunit protein uS2">
    <location>
        <begin position="1"/>
        <end position="272"/>
    </location>
</feature>
<feature type="region of interest" description="Disordered" evidence="2">
    <location>
        <begin position="238"/>
        <end position="272"/>
    </location>
</feature>
<feature type="compositionally biased region" description="Basic and acidic residues" evidence="2">
    <location>
        <begin position="255"/>
        <end position="272"/>
    </location>
</feature>
<proteinExistence type="inferred from homology"/>
<comment type="similarity">
    <text evidence="1">Belongs to the universal ribosomal protein uS2 family.</text>
</comment>
<reference key="1">
    <citation type="journal article" date="2004" name="Science">
        <title>Illuminating the evolutionary history of chlamydiae.</title>
        <authorList>
            <person name="Horn M."/>
            <person name="Collingro A."/>
            <person name="Schmitz-Esser S."/>
            <person name="Beier C.L."/>
            <person name="Purkhold U."/>
            <person name="Fartmann B."/>
            <person name="Brandt P."/>
            <person name="Nyakatura G.J."/>
            <person name="Droege M."/>
            <person name="Frishman D."/>
            <person name="Rattei T."/>
            <person name="Mewes H.-W."/>
            <person name="Wagner M."/>
        </authorList>
    </citation>
    <scope>NUCLEOTIDE SEQUENCE [LARGE SCALE GENOMIC DNA]</scope>
    <source>
        <strain>UWE25</strain>
    </source>
</reference>
<gene>
    <name evidence="1" type="primary">rpsB</name>
    <name type="ordered locus">pc0136</name>
</gene>
<dbReference type="EMBL" id="BX908798">
    <property type="protein sequence ID" value="CAF22860.1"/>
    <property type="molecule type" value="Genomic_DNA"/>
</dbReference>
<dbReference type="RefSeq" id="WP_011174686.1">
    <property type="nucleotide sequence ID" value="NC_005861.2"/>
</dbReference>
<dbReference type="SMR" id="Q6MEY9"/>
<dbReference type="STRING" id="264201.pc0136"/>
<dbReference type="KEGG" id="pcu:PC_RS00665"/>
<dbReference type="eggNOG" id="COG0052">
    <property type="taxonomic scope" value="Bacteria"/>
</dbReference>
<dbReference type="HOGENOM" id="CLU_040318_1_2_0"/>
<dbReference type="OrthoDB" id="9808036at2"/>
<dbReference type="Proteomes" id="UP000000529">
    <property type="component" value="Chromosome"/>
</dbReference>
<dbReference type="GO" id="GO:0022627">
    <property type="term" value="C:cytosolic small ribosomal subunit"/>
    <property type="evidence" value="ECO:0007669"/>
    <property type="project" value="TreeGrafter"/>
</dbReference>
<dbReference type="GO" id="GO:0003735">
    <property type="term" value="F:structural constituent of ribosome"/>
    <property type="evidence" value="ECO:0007669"/>
    <property type="project" value="InterPro"/>
</dbReference>
<dbReference type="GO" id="GO:0006412">
    <property type="term" value="P:translation"/>
    <property type="evidence" value="ECO:0007669"/>
    <property type="project" value="UniProtKB-UniRule"/>
</dbReference>
<dbReference type="CDD" id="cd01425">
    <property type="entry name" value="RPS2"/>
    <property type="match status" value="1"/>
</dbReference>
<dbReference type="Gene3D" id="3.40.50.10490">
    <property type="entry name" value="Glucose-6-phosphate isomerase like protein, domain 1"/>
    <property type="match status" value="1"/>
</dbReference>
<dbReference type="Gene3D" id="1.10.287.610">
    <property type="entry name" value="Helix hairpin bin"/>
    <property type="match status" value="1"/>
</dbReference>
<dbReference type="HAMAP" id="MF_00291_B">
    <property type="entry name" value="Ribosomal_uS2_B"/>
    <property type="match status" value="1"/>
</dbReference>
<dbReference type="InterPro" id="IPR001865">
    <property type="entry name" value="Ribosomal_uS2"/>
</dbReference>
<dbReference type="InterPro" id="IPR005706">
    <property type="entry name" value="Ribosomal_uS2_bac/mit/plastid"/>
</dbReference>
<dbReference type="InterPro" id="IPR018130">
    <property type="entry name" value="Ribosomal_uS2_CS"/>
</dbReference>
<dbReference type="InterPro" id="IPR023591">
    <property type="entry name" value="Ribosomal_uS2_flav_dom_sf"/>
</dbReference>
<dbReference type="NCBIfam" id="TIGR01011">
    <property type="entry name" value="rpsB_bact"/>
    <property type="match status" value="1"/>
</dbReference>
<dbReference type="PANTHER" id="PTHR12534">
    <property type="entry name" value="30S RIBOSOMAL PROTEIN S2 PROKARYOTIC AND ORGANELLAR"/>
    <property type="match status" value="1"/>
</dbReference>
<dbReference type="PANTHER" id="PTHR12534:SF0">
    <property type="entry name" value="SMALL RIBOSOMAL SUBUNIT PROTEIN US2M"/>
    <property type="match status" value="1"/>
</dbReference>
<dbReference type="Pfam" id="PF00318">
    <property type="entry name" value="Ribosomal_S2"/>
    <property type="match status" value="1"/>
</dbReference>
<dbReference type="PRINTS" id="PR00395">
    <property type="entry name" value="RIBOSOMALS2"/>
</dbReference>
<dbReference type="SUPFAM" id="SSF52313">
    <property type="entry name" value="Ribosomal protein S2"/>
    <property type="match status" value="1"/>
</dbReference>
<dbReference type="PROSITE" id="PS00962">
    <property type="entry name" value="RIBOSOMAL_S2_1"/>
    <property type="match status" value="1"/>
</dbReference>
<dbReference type="PROSITE" id="PS00963">
    <property type="entry name" value="RIBOSOMAL_S2_2"/>
    <property type="match status" value="1"/>
</dbReference>
<organism>
    <name type="scientific">Protochlamydia amoebophila (strain UWE25)</name>
    <dbReference type="NCBI Taxonomy" id="264201"/>
    <lineage>
        <taxon>Bacteria</taxon>
        <taxon>Pseudomonadati</taxon>
        <taxon>Chlamydiota</taxon>
        <taxon>Chlamydiia</taxon>
        <taxon>Parachlamydiales</taxon>
        <taxon>Parachlamydiaceae</taxon>
        <taxon>Candidatus Protochlamydia</taxon>
    </lineage>
</organism>
<evidence type="ECO:0000255" key="1">
    <source>
        <dbReference type="HAMAP-Rule" id="MF_00291"/>
    </source>
</evidence>
<evidence type="ECO:0000256" key="2">
    <source>
        <dbReference type="SAM" id="MobiDB-lite"/>
    </source>
</evidence>
<evidence type="ECO:0000305" key="3"/>
<keyword id="KW-1185">Reference proteome</keyword>
<keyword id="KW-0687">Ribonucleoprotein</keyword>
<keyword id="KW-0689">Ribosomal protein</keyword>
<sequence length="272" mass="30579">MAQNKNQTLPISIKDLLEAGAHFGHQTSRWNPKMKRFIFEERNGLYIIDLAKTLQQIRNAVDIVRDVVAKHKSILFVGTKKQAKAVLRELSEQCGEFYVCERWLGGMLTNLSTIRQSVKKLERIEKRISTGGEGLTKKEISLLTKDQIKLEKNLSGVRSMRKPPGLVIVVDPSKEHLAVAEANKLGIPVMGLVDTNCDPDPIEHVIACNDDALKSIKLILETLAKAIIDKKNDIKVYASKEEQTEEAEEETLSSKYREQDFQEAKSGARGEK</sequence>
<name>RS2_PARUW</name>
<accession>Q6MEY9</accession>
<protein>
    <recommendedName>
        <fullName evidence="1">Small ribosomal subunit protein uS2</fullName>
    </recommendedName>
    <alternativeName>
        <fullName evidence="3">30S ribosomal protein S2</fullName>
    </alternativeName>
</protein>